<gene>
    <name type="primary">ypdK</name>
    <name type="ordered locus">b4680</name>
    <name type="ordered locus">JW2375.1</name>
</gene>
<comment type="subcellular location">
    <subcellularLocation>
        <location evidence="5 6">Cell inner membrane</location>
        <topology evidence="2 4">Single-pass membrane protein</topology>
    </subcellularLocation>
</comment>
<comment type="induction">
    <text evidence="2 3">In exponential phase, strongly repressed by thiol oxidant diamide (at protein level).</text>
</comment>
<name>YPDK_ECOLI</name>
<feature type="chain" id="PRO_0000381987" description="Uncharacterized membrane protein YpdK">
    <location>
        <begin position="1"/>
        <end position="23"/>
    </location>
</feature>
<feature type="transmembrane region" description="Helical" evidence="1">
    <location>
        <begin position="3"/>
        <end position="23"/>
    </location>
</feature>
<accession>C1P610</accession>
<proteinExistence type="evidence at protein level"/>
<keyword id="KW-0997">Cell inner membrane</keyword>
<keyword id="KW-1003">Cell membrane</keyword>
<keyword id="KW-0472">Membrane</keyword>
<keyword id="KW-1185">Reference proteome</keyword>
<keyword id="KW-0346">Stress response</keyword>
<keyword id="KW-0812">Transmembrane</keyword>
<keyword id="KW-1133">Transmembrane helix</keyword>
<sequence length="23" mass="2704">MKYFFMGISFMVIVWAGTFALMI</sequence>
<protein>
    <recommendedName>
        <fullName>Uncharacterized membrane protein YpdK</fullName>
    </recommendedName>
</protein>
<reference key="1">
    <citation type="journal article" date="1997" name="Science">
        <title>The complete genome sequence of Escherichia coli K-12.</title>
        <authorList>
            <person name="Blattner F.R."/>
            <person name="Plunkett G. III"/>
            <person name="Bloch C.A."/>
            <person name="Perna N.T."/>
            <person name="Burland V."/>
            <person name="Riley M."/>
            <person name="Collado-Vides J."/>
            <person name="Glasner J.D."/>
            <person name="Rode C.K."/>
            <person name="Mayhew G.F."/>
            <person name="Gregor J."/>
            <person name="Davis N.W."/>
            <person name="Kirkpatrick H.A."/>
            <person name="Goeden M.A."/>
            <person name="Rose D.J."/>
            <person name="Mau B."/>
            <person name="Shao Y."/>
        </authorList>
    </citation>
    <scope>NUCLEOTIDE SEQUENCE [LARGE SCALE GENOMIC DNA]</scope>
    <source>
        <strain>K12 / MG1655 / ATCC 47076</strain>
    </source>
</reference>
<reference key="2">
    <citation type="journal article" date="2006" name="Mol. Syst. Biol.">
        <title>Highly accurate genome sequences of Escherichia coli K-12 strains MG1655 and W3110.</title>
        <authorList>
            <person name="Hayashi K."/>
            <person name="Morooka N."/>
            <person name="Yamamoto Y."/>
            <person name="Fujita K."/>
            <person name="Isono K."/>
            <person name="Choi S."/>
            <person name="Ohtsubo E."/>
            <person name="Baba T."/>
            <person name="Wanner B.L."/>
            <person name="Mori H."/>
            <person name="Horiuchi T."/>
        </authorList>
    </citation>
    <scope>NUCLEOTIDE SEQUENCE [LARGE SCALE GENOMIC DNA]</scope>
    <source>
        <strain>K12 / W3110 / ATCC 27325 / DSM 5911</strain>
    </source>
</reference>
<reference key="3">
    <citation type="journal article" date="2008" name="Mol. Microbiol.">
        <title>Small membrane proteins found by comparative genomics and ribosome binding site models.</title>
        <authorList>
            <person name="Hemm M.R."/>
            <person name="Paul B.J."/>
            <person name="Schneider T.D."/>
            <person name="Storz G."/>
            <person name="Rudd K.E."/>
        </authorList>
    </citation>
    <scope>IDENTIFICATION</scope>
    <scope>SUBCELLULAR LOCATION</scope>
    <scope>INDUCTION</scope>
    <source>
        <strain>K12 / MG1655 / ATCC 47076</strain>
    </source>
</reference>
<reference key="4">
    <citation type="journal article" date="2010" name="J. Bacteriol.">
        <title>Small stress response proteins in Escherichia coli: proteins missed by classical proteomic studies.</title>
        <authorList>
            <person name="Hemm M.R."/>
            <person name="Paul B.J."/>
            <person name="Miranda-Rios J."/>
            <person name="Zhang A."/>
            <person name="Soltanzad N."/>
            <person name="Storz G."/>
        </authorList>
    </citation>
    <scope>INDUCTION</scope>
    <source>
        <strain>K12 / MG1655 / ATCC 47076</strain>
    </source>
</reference>
<reference key="5">
    <citation type="journal article" date="2011" name="J. Biol. Chem.">
        <title>Membrane localization of small proteins in Escherichia coli.</title>
        <authorList>
            <person name="Fontaine F."/>
            <person name="Fuchs R.T."/>
            <person name="Storz G."/>
        </authorList>
    </citation>
    <scope>SUBCELLULAR LOCATION</scope>
    <source>
        <strain>K12 / MG1655 / ATCC 47076</strain>
    </source>
</reference>
<organism>
    <name type="scientific">Escherichia coli (strain K12)</name>
    <dbReference type="NCBI Taxonomy" id="83333"/>
    <lineage>
        <taxon>Bacteria</taxon>
        <taxon>Pseudomonadati</taxon>
        <taxon>Pseudomonadota</taxon>
        <taxon>Gammaproteobacteria</taxon>
        <taxon>Enterobacterales</taxon>
        <taxon>Enterobacteriaceae</taxon>
        <taxon>Escherichia</taxon>
    </lineage>
</organism>
<dbReference type="EMBL" id="U00096">
    <property type="protein sequence ID" value="ACO60002.1"/>
    <property type="molecule type" value="Genomic_DNA"/>
</dbReference>
<dbReference type="EMBL" id="AP009048">
    <property type="status" value="NOT_ANNOTATED_CDS"/>
    <property type="molecule type" value="Genomic_DNA"/>
</dbReference>
<dbReference type="RefSeq" id="WP_010723117.1">
    <property type="nucleotide sequence ID" value="NZ_STEB01000008.1"/>
</dbReference>
<dbReference type="RefSeq" id="YP_002791250.1">
    <property type="nucleotide sequence ID" value="NC_000913.3"/>
</dbReference>
<dbReference type="STRING" id="511145.b4680"/>
<dbReference type="PaxDb" id="511145-b4680"/>
<dbReference type="EnsemblBacteria" id="ACO60002">
    <property type="protein sequence ID" value="ACO60002"/>
    <property type="gene ID" value="b4680"/>
</dbReference>
<dbReference type="GeneID" id="7751622"/>
<dbReference type="GeneID" id="93774750"/>
<dbReference type="KEGG" id="eco:b4680"/>
<dbReference type="PATRIC" id="fig|511145.12.peg.2476"/>
<dbReference type="InParanoid" id="C1P610"/>
<dbReference type="BioCyc" id="EcoCyc:MONOMER0-2874"/>
<dbReference type="PRO" id="PR:C1P610"/>
<dbReference type="Proteomes" id="UP000000625">
    <property type="component" value="Chromosome"/>
</dbReference>
<dbReference type="GO" id="GO:0016020">
    <property type="term" value="C:membrane"/>
    <property type="evidence" value="ECO:0000314"/>
    <property type="project" value="EcoCyc"/>
</dbReference>
<dbReference type="GO" id="GO:0005886">
    <property type="term" value="C:plasma membrane"/>
    <property type="evidence" value="ECO:0000314"/>
    <property type="project" value="EcoCyc"/>
</dbReference>
<dbReference type="InterPro" id="IPR047846">
    <property type="entry name" value="YpdK"/>
</dbReference>
<dbReference type="NCBIfam" id="NF033437">
    <property type="entry name" value="YpdK"/>
    <property type="match status" value="1"/>
</dbReference>
<evidence type="ECO:0000255" key="1"/>
<evidence type="ECO:0000269" key="2">
    <source>
    </source>
</evidence>
<evidence type="ECO:0000269" key="3">
    <source>
    </source>
</evidence>
<evidence type="ECO:0000269" key="4">
    <source>
    </source>
</evidence>
<evidence type="ECO:0000305" key="5">
    <source>
    </source>
</evidence>
<evidence type="ECO:0000305" key="6">
    <source>
    </source>
</evidence>